<gene>
    <name type="primary">OFP5</name>
    <name type="ordered locus">At4g18830</name>
    <name type="ORF">F13C5.5</name>
</gene>
<accession>Q8VZN1</accession>
<accession>Q9SNA9</accession>
<evidence type="ECO:0000250" key="1"/>
<evidence type="ECO:0000255" key="2">
    <source>
        <dbReference type="PROSITE-ProRule" id="PRU01090"/>
    </source>
</evidence>
<evidence type="ECO:0000256" key="3">
    <source>
        <dbReference type="SAM" id="MobiDB-lite"/>
    </source>
</evidence>
<evidence type="ECO:0000269" key="4">
    <source>
    </source>
</evidence>
<evidence type="ECO:0000269" key="5">
    <source>
    </source>
</evidence>
<evidence type="ECO:0000269" key="6">
    <source>
    </source>
</evidence>
<evidence type="ECO:0000305" key="7"/>
<evidence type="ECO:0000305" key="8">
    <source>
    </source>
</evidence>
<feature type="chain" id="PRO_0000429674" description="Transcription repressor OFP5">
    <location>
        <begin position="1"/>
        <end position="349"/>
    </location>
</feature>
<feature type="domain" description="OVATE" evidence="2">
    <location>
        <begin position="286"/>
        <end position="345"/>
    </location>
</feature>
<feature type="region of interest" description="Disordered" evidence="3">
    <location>
        <begin position="1"/>
        <end position="20"/>
    </location>
</feature>
<feature type="region of interest" description="Disordered" evidence="3">
    <location>
        <begin position="29"/>
        <end position="94"/>
    </location>
</feature>
<feature type="region of interest" description="Disordered" evidence="3">
    <location>
        <begin position="143"/>
        <end position="183"/>
    </location>
</feature>
<feature type="compositionally biased region" description="Low complexity" evidence="3">
    <location>
        <begin position="10"/>
        <end position="20"/>
    </location>
</feature>
<feature type="compositionally biased region" description="Basic and acidic residues" evidence="3">
    <location>
        <begin position="37"/>
        <end position="48"/>
    </location>
</feature>
<feature type="compositionally biased region" description="Polar residues" evidence="3">
    <location>
        <begin position="49"/>
        <end position="62"/>
    </location>
</feature>
<feature type="compositionally biased region" description="Basic and acidic residues" evidence="3">
    <location>
        <begin position="63"/>
        <end position="94"/>
    </location>
</feature>
<feature type="compositionally biased region" description="Basic and acidic residues" evidence="3">
    <location>
        <begin position="143"/>
        <end position="167"/>
    </location>
</feature>
<dbReference type="EMBL" id="AL021711">
    <property type="protein sequence ID" value="CAB52868.1"/>
    <property type="status" value="ALT_INIT"/>
    <property type="molecule type" value="Genomic_DNA"/>
</dbReference>
<dbReference type="EMBL" id="AL161549">
    <property type="protein sequence ID" value="CAB78885.1"/>
    <property type="status" value="ALT_INIT"/>
    <property type="molecule type" value="Genomic_DNA"/>
</dbReference>
<dbReference type="EMBL" id="CP002687">
    <property type="protein sequence ID" value="AEE84096.1"/>
    <property type="molecule type" value="Genomic_DNA"/>
</dbReference>
<dbReference type="EMBL" id="AY063996">
    <property type="protein sequence ID" value="AAL36352.1"/>
    <property type="molecule type" value="mRNA"/>
</dbReference>
<dbReference type="EMBL" id="AY096608">
    <property type="protein sequence ID" value="AAM20258.1"/>
    <property type="molecule type" value="mRNA"/>
</dbReference>
<dbReference type="PIR" id="D85212">
    <property type="entry name" value="D85212"/>
</dbReference>
<dbReference type="RefSeq" id="NP_193618.2">
    <property type="nucleotide sequence ID" value="NM_117999.5"/>
</dbReference>
<dbReference type="BioGRID" id="12910">
    <property type="interactions" value="9"/>
</dbReference>
<dbReference type="FunCoup" id="Q8VZN1">
    <property type="interactions" value="27"/>
</dbReference>
<dbReference type="IntAct" id="Q8VZN1">
    <property type="interactions" value="8"/>
</dbReference>
<dbReference type="STRING" id="3702.Q8VZN1"/>
<dbReference type="iPTMnet" id="Q8VZN1"/>
<dbReference type="PaxDb" id="3702-AT4G18830.1"/>
<dbReference type="EnsemblPlants" id="AT4G18830.1">
    <property type="protein sequence ID" value="AT4G18830.1"/>
    <property type="gene ID" value="AT4G18830"/>
</dbReference>
<dbReference type="GeneID" id="827617"/>
<dbReference type="Gramene" id="AT4G18830.1">
    <property type="protein sequence ID" value="AT4G18830.1"/>
    <property type="gene ID" value="AT4G18830"/>
</dbReference>
<dbReference type="KEGG" id="ath:AT4G18830"/>
<dbReference type="Araport" id="AT4G18830"/>
<dbReference type="TAIR" id="AT4G18830">
    <property type="gene designation" value="OFP5"/>
</dbReference>
<dbReference type="eggNOG" id="ENOG502QQT7">
    <property type="taxonomic scope" value="Eukaryota"/>
</dbReference>
<dbReference type="HOGENOM" id="CLU_055920_0_0_1"/>
<dbReference type="InParanoid" id="Q8VZN1"/>
<dbReference type="OMA" id="WGRKKPV"/>
<dbReference type="OrthoDB" id="1928390at2759"/>
<dbReference type="PhylomeDB" id="Q8VZN1"/>
<dbReference type="PRO" id="PR:Q8VZN1"/>
<dbReference type="Proteomes" id="UP000006548">
    <property type="component" value="Chromosome 4"/>
</dbReference>
<dbReference type="ExpressionAtlas" id="Q8VZN1">
    <property type="expression patterns" value="baseline and differential"/>
</dbReference>
<dbReference type="GO" id="GO:0030863">
    <property type="term" value="C:cortical cytoskeleton"/>
    <property type="evidence" value="ECO:0000314"/>
    <property type="project" value="TAIR"/>
</dbReference>
<dbReference type="GO" id="GO:0005730">
    <property type="term" value="C:nucleolus"/>
    <property type="evidence" value="ECO:0000314"/>
    <property type="project" value="TAIR"/>
</dbReference>
<dbReference type="GO" id="GO:0043622">
    <property type="term" value="P:cortical microtubule organization"/>
    <property type="evidence" value="ECO:0000315"/>
    <property type="project" value="TAIR"/>
</dbReference>
<dbReference type="GO" id="GO:0009553">
    <property type="term" value="P:embryo sac development"/>
    <property type="evidence" value="ECO:0000315"/>
    <property type="project" value="TAIR"/>
</dbReference>
<dbReference type="GO" id="GO:0045892">
    <property type="term" value="P:negative regulation of DNA-templated transcription"/>
    <property type="evidence" value="ECO:0000314"/>
    <property type="project" value="TAIR"/>
</dbReference>
<dbReference type="InterPro" id="IPR038933">
    <property type="entry name" value="Ovate"/>
</dbReference>
<dbReference type="InterPro" id="IPR006458">
    <property type="entry name" value="Ovate_C"/>
</dbReference>
<dbReference type="NCBIfam" id="TIGR01568">
    <property type="entry name" value="A_thal_3678"/>
    <property type="match status" value="1"/>
</dbReference>
<dbReference type="PANTHER" id="PTHR33057:SF82">
    <property type="entry name" value="TRANSCRIPTION REPRESSOR OFP5"/>
    <property type="match status" value="1"/>
</dbReference>
<dbReference type="PANTHER" id="PTHR33057">
    <property type="entry name" value="TRANSCRIPTION REPRESSOR OFP7-RELATED"/>
    <property type="match status" value="1"/>
</dbReference>
<dbReference type="Pfam" id="PF04844">
    <property type="entry name" value="Ovate"/>
    <property type="match status" value="1"/>
</dbReference>
<dbReference type="PROSITE" id="PS51754">
    <property type="entry name" value="OVATE"/>
    <property type="match status" value="1"/>
</dbReference>
<organism>
    <name type="scientific">Arabidopsis thaliana</name>
    <name type="common">Mouse-ear cress</name>
    <dbReference type="NCBI Taxonomy" id="3702"/>
    <lineage>
        <taxon>Eukaryota</taxon>
        <taxon>Viridiplantae</taxon>
        <taxon>Streptophyta</taxon>
        <taxon>Embryophyta</taxon>
        <taxon>Tracheophyta</taxon>
        <taxon>Spermatophyta</taxon>
        <taxon>Magnoliopsida</taxon>
        <taxon>eudicotyledons</taxon>
        <taxon>Gunneridae</taxon>
        <taxon>Pentapetalae</taxon>
        <taxon>rosids</taxon>
        <taxon>malvids</taxon>
        <taxon>Brassicales</taxon>
        <taxon>Brassicaceae</taxon>
        <taxon>Camelineae</taxon>
        <taxon>Arabidopsis</taxon>
    </lineage>
</organism>
<keyword id="KW-0539">Nucleus</keyword>
<keyword id="KW-1185">Reference proteome</keyword>
<keyword id="KW-0678">Repressor</keyword>
<keyword id="KW-0804">Transcription</keyword>
<keyword id="KW-0805">Transcription regulation</keyword>
<reference key="1">
    <citation type="journal article" date="1999" name="Nature">
        <title>Sequence and analysis of chromosome 4 of the plant Arabidopsis thaliana.</title>
        <authorList>
            <person name="Mayer K.F.X."/>
            <person name="Schueller C."/>
            <person name="Wambutt R."/>
            <person name="Murphy G."/>
            <person name="Volckaert G."/>
            <person name="Pohl T."/>
            <person name="Duesterhoeft A."/>
            <person name="Stiekema W."/>
            <person name="Entian K.-D."/>
            <person name="Terryn N."/>
            <person name="Harris B."/>
            <person name="Ansorge W."/>
            <person name="Brandt P."/>
            <person name="Grivell L.A."/>
            <person name="Rieger M."/>
            <person name="Weichselgartner M."/>
            <person name="de Simone V."/>
            <person name="Obermaier B."/>
            <person name="Mache R."/>
            <person name="Mueller M."/>
            <person name="Kreis M."/>
            <person name="Delseny M."/>
            <person name="Puigdomenech P."/>
            <person name="Watson M."/>
            <person name="Schmidtheini T."/>
            <person name="Reichert B."/>
            <person name="Portetelle D."/>
            <person name="Perez-Alonso M."/>
            <person name="Boutry M."/>
            <person name="Bancroft I."/>
            <person name="Vos P."/>
            <person name="Hoheisel J."/>
            <person name="Zimmermann W."/>
            <person name="Wedler H."/>
            <person name="Ridley P."/>
            <person name="Langham S.-A."/>
            <person name="McCullagh B."/>
            <person name="Bilham L."/>
            <person name="Robben J."/>
            <person name="van der Schueren J."/>
            <person name="Grymonprez B."/>
            <person name="Chuang Y.-J."/>
            <person name="Vandenbussche F."/>
            <person name="Braeken M."/>
            <person name="Weltjens I."/>
            <person name="Voet M."/>
            <person name="Bastiaens I."/>
            <person name="Aert R."/>
            <person name="Defoor E."/>
            <person name="Weitzenegger T."/>
            <person name="Bothe G."/>
            <person name="Ramsperger U."/>
            <person name="Hilbert H."/>
            <person name="Braun M."/>
            <person name="Holzer E."/>
            <person name="Brandt A."/>
            <person name="Peters S."/>
            <person name="van Staveren M."/>
            <person name="Dirkse W."/>
            <person name="Mooijman P."/>
            <person name="Klein Lankhorst R."/>
            <person name="Rose M."/>
            <person name="Hauf J."/>
            <person name="Koetter P."/>
            <person name="Berneiser S."/>
            <person name="Hempel S."/>
            <person name="Feldpausch M."/>
            <person name="Lamberth S."/>
            <person name="Van den Daele H."/>
            <person name="De Keyser A."/>
            <person name="Buysshaert C."/>
            <person name="Gielen J."/>
            <person name="Villarroel R."/>
            <person name="De Clercq R."/>
            <person name="van Montagu M."/>
            <person name="Rogers J."/>
            <person name="Cronin A."/>
            <person name="Quail M.A."/>
            <person name="Bray-Allen S."/>
            <person name="Clark L."/>
            <person name="Doggett J."/>
            <person name="Hall S."/>
            <person name="Kay M."/>
            <person name="Lennard N."/>
            <person name="McLay K."/>
            <person name="Mayes R."/>
            <person name="Pettett A."/>
            <person name="Rajandream M.A."/>
            <person name="Lyne M."/>
            <person name="Benes V."/>
            <person name="Rechmann S."/>
            <person name="Borkova D."/>
            <person name="Bloecker H."/>
            <person name="Scharfe M."/>
            <person name="Grimm M."/>
            <person name="Loehnert T.-H."/>
            <person name="Dose S."/>
            <person name="de Haan M."/>
            <person name="Maarse A.C."/>
            <person name="Schaefer M."/>
            <person name="Mueller-Auer S."/>
            <person name="Gabel C."/>
            <person name="Fuchs M."/>
            <person name="Fartmann B."/>
            <person name="Granderath K."/>
            <person name="Dauner D."/>
            <person name="Herzl A."/>
            <person name="Neumann S."/>
            <person name="Argiriou A."/>
            <person name="Vitale D."/>
            <person name="Liguori R."/>
            <person name="Piravandi E."/>
            <person name="Massenet O."/>
            <person name="Quigley F."/>
            <person name="Clabauld G."/>
            <person name="Muendlein A."/>
            <person name="Felber R."/>
            <person name="Schnabl S."/>
            <person name="Hiller R."/>
            <person name="Schmidt W."/>
            <person name="Lecharny A."/>
            <person name="Aubourg S."/>
            <person name="Chefdor F."/>
            <person name="Cooke R."/>
            <person name="Berger C."/>
            <person name="Monfort A."/>
            <person name="Casacuberta E."/>
            <person name="Gibbons T."/>
            <person name="Weber N."/>
            <person name="Vandenbol M."/>
            <person name="Bargues M."/>
            <person name="Terol J."/>
            <person name="Torres A."/>
            <person name="Perez-Perez A."/>
            <person name="Purnelle B."/>
            <person name="Bent E."/>
            <person name="Johnson S."/>
            <person name="Tacon D."/>
            <person name="Jesse T."/>
            <person name="Heijnen L."/>
            <person name="Schwarz S."/>
            <person name="Scholler P."/>
            <person name="Heber S."/>
            <person name="Francs P."/>
            <person name="Bielke C."/>
            <person name="Frishman D."/>
            <person name="Haase D."/>
            <person name="Lemcke K."/>
            <person name="Mewes H.-W."/>
            <person name="Stocker S."/>
            <person name="Zaccaria P."/>
            <person name="Bevan M."/>
            <person name="Wilson R.K."/>
            <person name="de la Bastide M."/>
            <person name="Habermann K."/>
            <person name="Parnell L."/>
            <person name="Dedhia N."/>
            <person name="Gnoj L."/>
            <person name="Schutz K."/>
            <person name="Huang E."/>
            <person name="Spiegel L."/>
            <person name="Sekhon M."/>
            <person name="Murray J."/>
            <person name="Sheet P."/>
            <person name="Cordes M."/>
            <person name="Abu-Threideh J."/>
            <person name="Stoneking T."/>
            <person name="Kalicki J."/>
            <person name="Graves T."/>
            <person name="Harmon G."/>
            <person name="Edwards J."/>
            <person name="Latreille P."/>
            <person name="Courtney L."/>
            <person name="Cloud J."/>
            <person name="Abbott A."/>
            <person name="Scott K."/>
            <person name="Johnson D."/>
            <person name="Minx P."/>
            <person name="Bentley D."/>
            <person name="Fulton B."/>
            <person name="Miller N."/>
            <person name="Greco T."/>
            <person name="Kemp K."/>
            <person name="Kramer J."/>
            <person name="Fulton L."/>
            <person name="Mardis E."/>
            <person name="Dante M."/>
            <person name="Pepin K."/>
            <person name="Hillier L.W."/>
            <person name="Nelson J."/>
            <person name="Spieth J."/>
            <person name="Ryan E."/>
            <person name="Andrews S."/>
            <person name="Geisel C."/>
            <person name="Layman D."/>
            <person name="Du H."/>
            <person name="Ali J."/>
            <person name="Berghoff A."/>
            <person name="Jones K."/>
            <person name="Drone K."/>
            <person name="Cotton M."/>
            <person name="Joshu C."/>
            <person name="Antonoiu B."/>
            <person name="Zidanic M."/>
            <person name="Strong C."/>
            <person name="Sun H."/>
            <person name="Lamar B."/>
            <person name="Yordan C."/>
            <person name="Ma P."/>
            <person name="Zhong J."/>
            <person name="Preston R."/>
            <person name="Vil D."/>
            <person name="Shekher M."/>
            <person name="Matero A."/>
            <person name="Shah R."/>
            <person name="Swaby I.K."/>
            <person name="O'Shaughnessy A."/>
            <person name="Rodriguez M."/>
            <person name="Hoffman J."/>
            <person name="Till S."/>
            <person name="Granat S."/>
            <person name="Shohdy N."/>
            <person name="Hasegawa A."/>
            <person name="Hameed A."/>
            <person name="Lodhi M."/>
            <person name="Johnson A."/>
            <person name="Chen E."/>
            <person name="Marra M.A."/>
            <person name="Martienssen R."/>
            <person name="McCombie W.R."/>
        </authorList>
    </citation>
    <scope>NUCLEOTIDE SEQUENCE [LARGE SCALE GENOMIC DNA]</scope>
    <source>
        <strain>cv. Columbia</strain>
    </source>
</reference>
<reference key="2">
    <citation type="journal article" date="2017" name="Plant J.">
        <title>Araport11: a complete reannotation of the Arabidopsis thaliana reference genome.</title>
        <authorList>
            <person name="Cheng C.Y."/>
            <person name="Krishnakumar V."/>
            <person name="Chan A.P."/>
            <person name="Thibaud-Nissen F."/>
            <person name="Schobel S."/>
            <person name="Town C.D."/>
        </authorList>
    </citation>
    <scope>GENOME REANNOTATION</scope>
    <source>
        <strain>cv. Columbia</strain>
    </source>
</reference>
<reference key="3">
    <citation type="journal article" date="2003" name="Science">
        <title>Empirical analysis of transcriptional activity in the Arabidopsis genome.</title>
        <authorList>
            <person name="Yamada K."/>
            <person name="Lim J."/>
            <person name="Dale J.M."/>
            <person name="Chen H."/>
            <person name="Shinn P."/>
            <person name="Palm C.J."/>
            <person name="Southwick A.M."/>
            <person name="Wu H.C."/>
            <person name="Kim C.J."/>
            <person name="Nguyen M."/>
            <person name="Pham P.K."/>
            <person name="Cheuk R.F."/>
            <person name="Karlin-Newmann G."/>
            <person name="Liu S.X."/>
            <person name="Lam B."/>
            <person name="Sakano H."/>
            <person name="Wu T."/>
            <person name="Yu G."/>
            <person name="Miranda M."/>
            <person name="Quach H.L."/>
            <person name="Tripp M."/>
            <person name="Chang C.H."/>
            <person name="Lee J.M."/>
            <person name="Toriumi M.J."/>
            <person name="Chan M.M."/>
            <person name="Tang C.C."/>
            <person name="Onodera C.S."/>
            <person name="Deng J.M."/>
            <person name="Akiyama K."/>
            <person name="Ansari Y."/>
            <person name="Arakawa T."/>
            <person name="Banh J."/>
            <person name="Banno F."/>
            <person name="Bowser L."/>
            <person name="Brooks S.Y."/>
            <person name="Carninci P."/>
            <person name="Chao Q."/>
            <person name="Choy N."/>
            <person name="Enju A."/>
            <person name="Goldsmith A.D."/>
            <person name="Gurjal M."/>
            <person name="Hansen N.F."/>
            <person name="Hayashizaki Y."/>
            <person name="Johnson-Hopson C."/>
            <person name="Hsuan V.W."/>
            <person name="Iida K."/>
            <person name="Karnes M."/>
            <person name="Khan S."/>
            <person name="Koesema E."/>
            <person name="Ishida J."/>
            <person name="Jiang P.X."/>
            <person name="Jones T."/>
            <person name="Kawai J."/>
            <person name="Kamiya A."/>
            <person name="Meyers C."/>
            <person name="Nakajima M."/>
            <person name="Narusaka M."/>
            <person name="Seki M."/>
            <person name="Sakurai T."/>
            <person name="Satou M."/>
            <person name="Tamse R."/>
            <person name="Vaysberg M."/>
            <person name="Wallender E.K."/>
            <person name="Wong C."/>
            <person name="Yamamura Y."/>
            <person name="Yuan S."/>
            <person name="Shinozaki K."/>
            <person name="Davis R.W."/>
            <person name="Theologis A."/>
            <person name="Ecker J.R."/>
        </authorList>
    </citation>
    <scope>NUCLEOTIDE SEQUENCE [LARGE SCALE MRNA]</scope>
    <source>
        <strain>cv. Columbia</strain>
    </source>
</reference>
<reference key="4">
    <citation type="journal article" date="2005" name="Proc. Natl. Acad. Sci. U.S.A.">
        <title>A central role of Arabidopsis thaliana ovate family proteins in networking and subcellular localization of 3-aa loop extension homeodomain proteins.</title>
        <authorList>
            <person name="Hackbusch J."/>
            <person name="Richter K."/>
            <person name="Muller J."/>
            <person name="Salamini F."/>
            <person name="Uhrig J.F."/>
        </authorList>
    </citation>
    <scope>FUNCTION</scope>
    <scope>INTERACTION WITH BLH1; BLH2; BLH3; BLH4; BLH6 AND BLH10</scope>
    <scope>SUBCELLULAR LOCATION</scope>
</reference>
<reference key="5">
    <citation type="journal article" date="2007" name="Plant Cell">
        <title>Cell-fate switch of synergid to egg cell in Arabidopsis eostre mutant embryo sacs arises from misexpression of the BEL1-like homeodomain gene BLH1.</title>
        <authorList>
            <person name="Pagnussat G.C."/>
            <person name="Yu H.J."/>
            <person name="Sundaresan V."/>
        </authorList>
    </citation>
    <scope>FUNCTION</scope>
    <scope>DISRUPTION PHENOTYPE</scope>
</reference>
<reference key="6">
    <citation type="journal article" date="2011" name="PLoS ONE">
        <title>Arabidopsis ovate family proteins, a novel transcriptional repressor family, control multiple aspects of plant growth and development.</title>
        <authorList>
            <person name="Wang S."/>
            <person name="Chang Y."/>
            <person name="Guo J."/>
            <person name="Zeng Q."/>
            <person name="Ellis B.E."/>
            <person name="Chen J.G."/>
        </authorList>
    </citation>
    <scope>FUNCTION</scope>
    <scope>TISSUE SPECIFICITY</scope>
    <scope>GENE FAMILY</scope>
</reference>
<sequence>MMRWGRKKPVSSSSSSGLSRALPVSWFSKLSGSSDLKPAKEKKQDEKASQNISVKTSLSSTTRRSDIHENSKRFQRVSVEKENSATRSADKESNEKFEEIMSSVRKKVRDFQKETCGFLEVEAMDRDNGTVILTPRIQVNRDKQRCERRDQRLLEQKPKRSEQDAGVKVKKPARRTGTGGYSREDSVILGHTITKPAHQWEKLKEVKLREVKLKADQQRKSLYLKRELNRIGTKENNKVRVFSPRASEKCRVKAIEDLKKAKQRAREHELLIETADGGMENESFAVVKCSSDPQKDFRDSMIEMIMENGINHPEELKELLVCYLRLNTDEYHDMIISVFQQVHNDFNFH</sequence>
<protein>
    <recommendedName>
        <fullName>Transcription repressor OFP5</fullName>
    </recommendedName>
    <alternativeName>
        <fullName>Ovate family protein 5</fullName>
        <shortName>AtOFP5</shortName>
    </alternativeName>
</protein>
<name>OFP5_ARATH</name>
<comment type="function">
    <text evidence="4 5 6">Transcriptional repressor that regulates multiple aspects of plant growth and development through the regulation of BEL1-LIKE (BLH) and KNOX TALE (KNAT) homeodomain transcription factors. Required for embryo development.</text>
</comment>
<comment type="subunit">
    <text evidence="4">Interacts with BLH1, BLH2, BLH3, BLH4, BLH6 and BLH10.</text>
</comment>
<comment type="interaction">
    <interactant intactId="EBI-1148457">
        <id>Q8VZN1</id>
    </interactant>
    <interactant intactId="EBI-25506855">
        <id>O23160</id>
        <label>MYB73</label>
    </interactant>
    <organismsDiffer>false</organismsDiffer>
    <experiments>3</experiments>
</comment>
<comment type="subcellular location">
    <subcellularLocation>
        <location evidence="1">Nucleus</location>
    </subcellularLocation>
</comment>
<comment type="tissue specificity">
    <text evidence="6">Expressed in roots, rosette and cauline leaves, and flower buds.</text>
</comment>
<comment type="disruption phenotype">
    <text evidence="5">Embryonic lethality when homozygous.</text>
</comment>
<comment type="miscellaneous">
    <text evidence="8">Plants over-expressing OFP5 show kidney-shaped cotyledons, round and curled leaves, small rosette size, late flowering, reduced fertilization and round seeds.</text>
</comment>
<comment type="sequence caution" evidence="7">
    <conflict type="erroneous initiation">
        <sequence resource="EMBL-CDS" id="CAB52868"/>
    </conflict>
    <text>Truncated N-terminus.</text>
</comment>
<comment type="sequence caution" evidence="7">
    <conflict type="erroneous initiation">
        <sequence resource="EMBL-CDS" id="CAB78885"/>
    </conflict>
    <text>Truncated N-terminus.</text>
</comment>
<proteinExistence type="evidence at protein level"/>